<feature type="chain" id="PRO_0000316530" description="GTP cyclohydrolase FolE2">
    <location>
        <begin position="1"/>
        <end position="268"/>
    </location>
</feature>
<feature type="site" description="May be catalytically important" evidence="1">
    <location>
        <position position="154"/>
    </location>
</feature>
<proteinExistence type="inferred from homology"/>
<sequence length="268" mass="29730">MNTRDPGLAAIPDVQATPDTRRIAIQRVGVKGVRYPLTVKTLSGVQPSVGTWNMYVHLAEEQKGTHMSRFIALLEENTQALDVNVFGGMIRKMLALLEADAGRIEVSFPYFINKTAPVSGVQSLMDYEVGFNGEIKNGKLEITLKVLVPVTSLCPCSKKISAYGAHNQRSHITVQALLADDLVVEELIAQIEAQASCELFGLLKRPDEKYVTERAYDNPKFVEDLVRDVAVMLNNEARVLAYTLEAENFESIHNHSAYALIELDKRLA</sequence>
<evidence type="ECO:0000255" key="1">
    <source>
        <dbReference type="HAMAP-Rule" id="MF_01527"/>
    </source>
</evidence>
<accession>A6SUS5</accession>
<dbReference type="EC" id="3.5.4.16" evidence="1"/>
<dbReference type="EMBL" id="CP000269">
    <property type="protein sequence ID" value="ABR88376.1"/>
    <property type="molecule type" value="Genomic_DNA"/>
</dbReference>
<dbReference type="RefSeq" id="WP_012078197.1">
    <property type="nucleotide sequence ID" value="NC_009659.1"/>
</dbReference>
<dbReference type="SMR" id="A6SUS5"/>
<dbReference type="STRING" id="375286.mma_0332"/>
<dbReference type="KEGG" id="mms:mma_0332"/>
<dbReference type="eggNOG" id="COG1469">
    <property type="taxonomic scope" value="Bacteria"/>
</dbReference>
<dbReference type="HOGENOM" id="CLU_062816_1_1_4"/>
<dbReference type="OrthoDB" id="9774824at2"/>
<dbReference type="UniPathway" id="UPA00848">
    <property type="reaction ID" value="UER00151"/>
</dbReference>
<dbReference type="Proteomes" id="UP000006388">
    <property type="component" value="Chromosome"/>
</dbReference>
<dbReference type="GO" id="GO:0003934">
    <property type="term" value="F:GTP cyclohydrolase I activity"/>
    <property type="evidence" value="ECO:0007669"/>
    <property type="project" value="UniProtKB-UniRule"/>
</dbReference>
<dbReference type="GO" id="GO:0046654">
    <property type="term" value="P:tetrahydrofolate biosynthetic process"/>
    <property type="evidence" value="ECO:0007669"/>
    <property type="project" value="UniProtKB-UniRule"/>
</dbReference>
<dbReference type="Gene3D" id="3.10.270.10">
    <property type="entry name" value="Urate Oxidase"/>
    <property type="match status" value="1"/>
</dbReference>
<dbReference type="HAMAP" id="MF_01527_B">
    <property type="entry name" value="GTP_cyclohydrol_B"/>
    <property type="match status" value="1"/>
</dbReference>
<dbReference type="InterPro" id="IPR022838">
    <property type="entry name" value="GTP_cyclohydrolase_FolE2"/>
</dbReference>
<dbReference type="InterPro" id="IPR003801">
    <property type="entry name" value="GTP_cyclohydrolase_FolE2/MptA"/>
</dbReference>
<dbReference type="NCBIfam" id="NF010200">
    <property type="entry name" value="PRK13674.1-1"/>
    <property type="match status" value="1"/>
</dbReference>
<dbReference type="PANTHER" id="PTHR36445">
    <property type="entry name" value="GTP CYCLOHYDROLASE MPTA"/>
    <property type="match status" value="1"/>
</dbReference>
<dbReference type="PANTHER" id="PTHR36445:SF1">
    <property type="entry name" value="GTP CYCLOHYDROLASE MPTA"/>
    <property type="match status" value="1"/>
</dbReference>
<dbReference type="Pfam" id="PF02649">
    <property type="entry name" value="GCHY-1"/>
    <property type="match status" value="1"/>
</dbReference>
<name>GCH4_JANMA</name>
<keyword id="KW-0378">Hydrolase</keyword>
<organism>
    <name type="scientific">Janthinobacterium sp. (strain Marseille)</name>
    <name type="common">Minibacterium massiliensis</name>
    <dbReference type="NCBI Taxonomy" id="375286"/>
    <lineage>
        <taxon>Bacteria</taxon>
        <taxon>Pseudomonadati</taxon>
        <taxon>Pseudomonadota</taxon>
        <taxon>Betaproteobacteria</taxon>
        <taxon>Burkholderiales</taxon>
        <taxon>Oxalobacteraceae</taxon>
        <taxon>Janthinobacterium</taxon>
    </lineage>
</organism>
<reference key="1">
    <citation type="journal article" date="2007" name="PLoS Genet.">
        <title>Genome analysis of Minibacterium massiliensis highlights the convergent evolution of water-living bacteria.</title>
        <authorList>
            <person name="Audic S."/>
            <person name="Robert C."/>
            <person name="Campagna B."/>
            <person name="Parinello H."/>
            <person name="Claverie J.-M."/>
            <person name="Raoult D."/>
            <person name="Drancourt M."/>
        </authorList>
    </citation>
    <scope>NUCLEOTIDE SEQUENCE [LARGE SCALE GENOMIC DNA]</scope>
    <source>
        <strain>Marseille</strain>
    </source>
</reference>
<comment type="function">
    <text evidence="1">Converts GTP to 7,8-dihydroneopterin triphosphate.</text>
</comment>
<comment type="catalytic activity">
    <reaction evidence="1">
        <text>GTP + H2O = 7,8-dihydroneopterin 3'-triphosphate + formate + H(+)</text>
        <dbReference type="Rhea" id="RHEA:17473"/>
        <dbReference type="ChEBI" id="CHEBI:15377"/>
        <dbReference type="ChEBI" id="CHEBI:15378"/>
        <dbReference type="ChEBI" id="CHEBI:15740"/>
        <dbReference type="ChEBI" id="CHEBI:37565"/>
        <dbReference type="ChEBI" id="CHEBI:58462"/>
        <dbReference type="EC" id="3.5.4.16"/>
    </reaction>
</comment>
<comment type="pathway">
    <text evidence="1">Cofactor biosynthesis; 7,8-dihydroneopterin triphosphate biosynthesis; 7,8-dihydroneopterin triphosphate from GTP: step 1/1.</text>
</comment>
<comment type="similarity">
    <text evidence="1">Belongs to the GTP cyclohydrolase IV family.</text>
</comment>
<protein>
    <recommendedName>
        <fullName evidence="1">GTP cyclohydrolase FolE2</fullName>
        <ecNumber evidence="1">3.5.4.16</ecNumber>
    </recommendedName>
</protein>
<gene>
    <name evidence="1" type="primary">folE2</name>
    <name type="ordered locus">mma_0332</name>
</gene>